<feature type="chain" id="PRO_0000071356" description="Uncharacterized protein L801">
    <location>
        <begin position="1"/>
        <end position="131"/>
    </location>
</feature>
<feature type="transmembrane region" description="Helical" evidence="1">
    <location>
        <begin position="52"/>
        <end position="72"/>
    </location>
</feature>
<feature type="transmembrane region" description="Helical" evidence="1">
    <location>
        <begin position="97"/>
        <end position="117"/>
    </location>
</feature>
<protein>
    <recommendedName>
        <fullName>Uncharacterized protein L801</fullName>
    </recommendedName>
</protein>
<organism>
    <name type="scientific">Acanthamoeba polyphaga mimivirus</name>
    <name type="common">APMV</name>
    <dbReference type="NCBI Taxonomy" id="212035"/>
    <lineage>
        <taxon>Viruses</taxon>
        <taxon>Varidnaviria</taxon>
        <taxon>Bamfordvirae</taxon>
        <taxon>Nucleocytoviricota</taxon>
        <taxon>Megaviricetes</taxon>
        <taxon>Imitervirales</taxon>
        <taxon>Mimiviridae</taxon>
        <taxon>Megamimivirinae</taxon>
        <taxon>Mimivirus</taxon>
        <taxon>Mimivirus bradfordmassiliense</taxon>
    </lineage>
</organism>
<accession>Q5UR61</accession>
<organismHost>
    <name type="scientific">Acanthamoeba polyphaga</name>
    <name type="common">Amoeba</name>
    <dbReference type="NCBI Taxonomy" id="5757"/>
</organismHost>
<sequence length="131" mass="15473">MHNKRYNPDVVIDFGVDFSNDYNKSKNKFFDRYIIFNKDFMKYIFKLALRALIMIGIIELSYFISLGGFYLVSNDPIYFRNLSIFHARGVEFATECSDIISIFCSIAFVLFCIYDVGKYYVTKCKSSKRYQ</sequence>
<dbReference type="EMBL" id="AY653733">
    <property type="protein sequence ID" value="AAV51061.1"/>
    <property type="molecule type" value="Genomic_DNA"/>
</dbReference>
<dbReference type="KEGG" id="vg:9925463"/>
<dbReference type="Proteomes" id="UP000001134">
    <property type="component" value="Genome"/>
</dbReference>
<dbReference type="GO" id="GO:0016020">
    <property type="term" value="C:membrane"/>
    <property type="evidence" value="ECO:0007669"/>
    <property type="project" value="UniProtKB-SubCell"/>
</dbReference>
<keyword id="KW-0472">Membrane</keyword>
<keyword id="KW-1185">Reference proteome</keyword>
<keyword id="KW-0812">Transmembrane</keyword>
<keyword id="KW-1133">Transmembrane helix</keyword>
<gene>
    <name type="ordered locus">MIMI_L801</name>
</gene>
<evidence type="ECO:0000255" key="1"/>
<evidence type="ECO:0000305" key="2"/>
<proteinExistence type="predicted"/>
<comment type="subcellular location">
    <subcellularLocation>
        <location evidence="2">Membrane</location>
        <topology evidence="2">Multi-pass membrane protein</topology>
    </subcellularLocation>
</comment>
<name>YL801_MIMIV</name>
<reference key="1">
    <citation type="journal article" date="2004" name="Science">
        <title>The 1.2-megabase genome sequence of Mimivirus.</title>
        <authorList>
            <person name="Raoult D."/>
            <person name="Audic S."/>
            <person name="Robert C."/>
            <person name="Abergel C."/>
            <person name="Renesto P."/>
            <person name="Ogata H."/>
            <person name="La Scola B."/>
            <person name="Susan M."/>
            <person name="Claverie J.-M."/>
        </authorList>
    </citation>
    <scope>NUCLEOTIDE SEQUENCE [LARGE SCALE GENOMIC DNA]</scope>
    <source>
        <strain>Rowbotham-Bradford</strain>
    </source>
</reference>